<name>RL21_BURA4</name>
<dbReference type="EMBL" id="CP001025">
    <property type="protein sequence ID" value="ACB63006.1"/>
    <property type="molecule type" value="Genomic_DNA"/>
</dbReference>
<dbReference type="RefSeq" id="WP_006025184.1">
    <property type="nucleotide sequence ID" value="NC_010551.1"/>
</dbReference>
<dbReference type="SMR" id="B1YSU5"/>
<dbReference type="GeneID" id="98106574"/>
<dbReference type="KEGG" id="bac:BamMC406_0509"/>
<dbReference type="HOGENOM" id="CLU_061463_3_1_4"/>
<dbReference type="OrthoDB" id="9813334at2"/>
<dbReference type="Proteomes" id="UP000001680">
    <property type="component" value="Chromosome 1"/>
</dbReference>
<dbReference type="GO" id="GO:0005737">
    <property type="term" value="C:cytoplasm"/>
    <property type="evidence" value="ECO:0007669"/>
    <property type="project" value="UniProtKB-ARBA"/>
</dbReference>
<dbReference type="GO" id="GO:1990904">
    <property type="term" value="C:ribonucleoprotein complex"/>
    <property type="evidence" value="ECO:0007669"/>
    <property type="project" value="UniProtKB-KW"/>
</dbReference>
<dbReference type="GO" id="GO:0005840">
    <property type="term" value="C:ribosome"/>
    <property type="evidence" value="ECO:0007669"/>
    <property type="project" value="UniProtKB-KW"/>
</dbReference>
<dbReference type="GO" id="GO:0019843">
    <property type="term" value="F:rRNA binding"/>
    <property type="evidence" value="ECO:0007669"/>
    <property type="project" value="UniProtKB-UniRule"/>
</dbReference>
<dbReference type="GO" id="GO:0003735">
    <property type="term" value="F:structural constituent of ribosome"/>
    <property type="evidence" value="ECO:0007669"/>
    <property type="project" value="InterPro"/>
</dbReference>
<dbReference type="GO" id="GO:0006412">
    <property type="term" value="P:translation"/>
    <property type="evidence" value="ECO:0007669"/>
    <property type="project" value="UniProtKB-UniRule"/>
</dbReference>
<dbReference type="HAMAP" id="MF_01363">
    <property type="entry name" value="Ribosomal_bL21"/>
    <property type="match status" value="1"/>
</dbReference>
<dbReference type="InterPro" id="IPR028909">
    <property type="entry name" value="bL21-like"/>
</dbReference>
<dbReference type="InterPro" id="IPR036164">
    <property type="entry name" value="bL21-like_sf"/>
</dbReference>
<dbReference type="InterPro" id="IPR001787">
    <property type="entry name" value="Ribosomal_bL21"/>
</dbReference>
<dbReference type="InterPro" id="IPR018258">
    <property type="entry name" value="Ribosomal_bL21_CS"/>
</dbReference>
<dbReference type="NCBIfam" id="TIGR00061">
    <property type="entry name" value="L21"/>
    <property type="match status" value="1"/>
</dbReference>
<dbReference type="PANTHER" id="PTHR21349">
    <property type="entry name" value="50S RIBOSOMAL PROTEIN L21"/>
    <property type="match status" value="1"/>
</dbReference>
<dbReference type="PANTHER" id="PTHR21349:SF0">
    <property type="entry name" value="LARGE RIBOSOMAL SUBUNIT PROTEIN BL21M"/>
    <property type="match status" value="1"/>
</dbReference>
<dbReference type="Pfam" id="PF00829">
    <property type="entry name" value="Ribosomal_L21p"/>
    <property type="match status" value="1"/>
</dbReference>
<dbReference type="SUPFAM" id="SSF141091">
    <property type="entry name" value="L21p-like"/>
    <property type="match status" value="1"/>
</dbReference>
<dbReference type="PROSITE" id="PS01169">
    <property type="entry name" value="RIBOSOMAL_L21"/>
    <property type="match status" value="1"/>
</dbReference>
<protein>
    <recommendedName>
        <fullName evidence="1">Large ribosomal subunit protein bL21</fullName>
    </recommendedName>
    <alternativeName>
        <fullName evidence="2">50S ribosomal protein L21</fullName>
    </alternativeName>
</protein>
<sequence>MYAVIKTGGKQYKVAVGEKLKVEQIPADIDAEITLDQVLAVGEGESIKFGTPLVSGASVKATVVSHGRHAKVTIFKMRRRKHYQKHGGHRQNYTELRIDAINA</sequence>
<keyword id="KW-0687">Ribonucleoprotein</keyword>
<keyword id="KW-0689">Ribosomal protein</keyword>
<keyword id="KW-0694">RNA-binding</keyword>
<keyword id="KW-0699">rRNA-binding</keyword>
<organism>
    <name type="scientific">Burkholderia ambifaria (strain MC40-6)</name>
    <dbReference type="NCBI Taxonomy" id="398577"/>
    <lineage>
        <taxon>Bacteria</taxon>
        <taxon>Pseudomonadati</taxon>
        <taxon>Pseudomonadota</taxon>
        <taxon>Betaproteobacteria</taxon>
        <taxon>Burkholderiales</taxon>
        <taxon>Burkholderiaceae</taxon>
        <taxon>Burkholderia</taxon>
        <taxon>Burkholderia cepacia complex</taxon>
    </lineage>
</organism>
<evidence type="ECO:0000255" key="1">
    <source>
        <dbReference type="HAMAP-Rule" id="MF_01363"/>
    </source>
</evidence>
<evidence type="ECO:0000305" key="2"/>
<reference key="1">
    <citation type="submission" date="2008-04" db="EMBL/GenBank/DDBJ databases">
        <title>Complete sequence of chromosome 1 of Burkholderia ambifaria MC40-6.</title>
        <authorList>
            <person name="Copeland A."/>
            <person name="Lucas S."/>
            <person name="Lapidus A."/>
            <person name="Glavina del Rio T."/>
            <person name="Dalin E."/>
            <person name="Tice H."/>
            <person name="Pitluck S."/>
            <person name="Chain P."/>
            <person name="Malfatti S."/>
            <person name="Shin M."/>
            <person name="Vergez L."/>
            <person name="Lang D."/>
            <person name="Schmutz J."/>
            <person name="Larimer F."/>
            <person name="Land M."/>
            <person name="Hauser L."/>
            <person name="Kyrpides N."/>
            <person name="Lykidis A."/>
            <person name="Ramette A."/>
            <person name="Konstantinidis K."/>
            <person name="Tiedje J."/>
            <person name="Richardson P."/>
        </authorList>
    </citation>
    <scope>NUCLEOTIDE SEQUENCE [LARGE SCALE GENOMIC DNA]</scope>
    <source>
        <strain>MC40-6</strain>
    </source>
</reference>
<feature type="chain" id="PRO_1000143763" description="Large ribosomal subunit protein bL21">
    <location>
        <begin position="1"/>
        <end position="103"/>
    </location>
</feature>
<accession>B1YSU5</accession>
<gene>
    <name evidence="1" type="primary">rplU</name>
    <name type="ordered locus">BamMC406_0509</name>
</gene>
<proteinExistence type="inferred from homology"/>
<comment type="function">
    <text evidence="1">This protein binds to 23S rRNA in the presence of protein L20.</text>
</comment>
<comment type="subunit">
    <text evidence="1">Part of the 50S ribosomal subunit. Contacts protein L20.</text>
</comment>
<comment type="similarity">
    <text evidence="1">Belongs to the bacterial ribosomal protein bL21 family.</text>
</comment>